<name>SYE1_CAMC5</name>
<proteinExistence type="inferred from homology"/>
<organism>
    <name type="scientific">Campylobacter curvus (strain 525.92)</name>
    <dbReference type="NCBI Taxonomy" id="360105"/>
    <lineage>
        <taxon>Bacteria</taxon>
        <taxon>Pseudomonadati</taxon>
        <taxon>Campylobacterota</taxon>
        <taxon>Epsilonproteobacteria</taxon>
        <taxon>Campylobacterales</taxon>
        <taxon>Campylobacteraceae</taxon>
        <taxon>Campylobacter</taxon>
    </lineage>
</organism>
<dbReference type="EC" id="6.1.1.17" evidence="1"/>
<dbReference type="EMBL" id="CP000767">
    <property type="protein sequence ID" value="EAU00724.1"/>
    <property type="molecule type" value="Genomic_DNA"/>
</dbReference>
<dbReference type="RefSeq" id="WP_011992070.1">
    <property type="nucleotide sequence ID" value="NC_009715.2"/>
</dbReference>
<dbReference type="SMR" id="A7GXI1"/>
<dbReference type="STRING" id="360105.CCV52592_0438"/>
<dbReference type="KEGG" id="ccv:CCV52592_0438"/>
<dbReference type="HOGENOM" id="CLU_015768_6_0_7"/>
<dbReference type="OrthoDB" id="9807503at2"/>
<dbReference type="Proteomes" id="UP000006380">
    <property type="component" value="Chromosome"/>
</dbReference>
<dbReference type="GO" id="GO:0005829">
    <property type="term" value="C:cytosol"/>
    <property type="evidence" value="ECO:0007669"/>
    <property type="project" value="TreeGrafter"/>
</dbReference>
<dbReference type="GO" id="GO:0005524">
    <property type="term" value="F:ATP binding"/>
    <property type="evidence" value="ECO:0007669"/>
    <property type="project" value="UniProtKB-UniRule"/>
</dbReference>
<dbReference type="GO" id="GO:0004818">
    <property type="term" value="F:glutamate-tRNA ligase activity"/>
    <property type="evidence" value="ECO:0007669"/>
    <property type="project" value="UniProtKB-UniRule"/>
</dbReference>
<dbReference type="GO" id="GO:0000049">
    <property type="term" value="F:tRNA binding"/>
    <property type="evidence" value="ECO:0007669"/>
    <property type="project" value="InterPro"/>
</dbReference>
<dbReference type="GO" id="GO:0006424">
    <property type="term" value="P:glutamyl-tRNA aminoacylation"/>
    <property type="evidence" value="ECO:0007669"/>
    <property type="project" value="UniProtKB-UniRule"/>
</dbReference>
<dbReference type="Gene3D" id="1.10.10.350">
    <property type="match status" value="1"/>
</dbReference>
<dbReference type="Gene3D" id="3.40.50.620">
    <property type="entry name" value="HUPs"/>
    <property type="match status" value="1"/>
</dbReference>
<dbReference type="HAMAP" id="MF_00022">
    <property type="entry name" value="Glu_tRNA_synth_type1"/>
    <property type="match status" value="1"/>
</dbReference>
<dbReference type="InterPro" id="IPR045462">
    <property type="entry name" value="aa-tRNA-synth_I_cd-bd"/>
</dbReference>
<dbReference type="InterPro" id="IPR020751">
    <property type="entry name" value="aa-tRNA-synth_I_codon-bd_sub2"/>
</dbReference>
<dbReference type="InterPro" id="IPR001412">
    <property type="entry name" value="aa-tRNA-synth_I_CS"/>
</dbReference>
<dbReference type="InterPro" id="IPR008925">
    <property type="entry name" value="aa_tRNA-synth_I_cd-bd_sf"/>
</dbReference>
<dbReference type="InterPro" id="IPR004527">
    <property type="entry name" value="Glu-tRNA-ligase_bac/mito"/>
</dbReference>
<dbReference type="InterPro" id="IPR000924">
    <property type="entry name" value="Glu/Gln-tRNA-synth"/>
</dbReference>
<dbReference type="InterPro" id="IPR020058">
    <property type="entry name" value="Glu/Gln-tRNA-synth_Ib_cat-dom"/>
</dbReference>
<dbReference type="InterPro" id="IPR049940">
    <property type="entry name" value="GluQ/Sye"/>
</dbReference>
<dbReference type="InterPro" id="IPR014729">
    <property type="entry name" value="Rossmann-like_a/b/a_fold"/>
</dbReference>
<dbReference type="NCBIfam" id="TIGR00464">
    <property type="entry name" value="gltX_bact"/>
    <property type="match status" value="1"/>
</dbReference>
<dbReference type="PANTHER" id="PTHR43311">
    <property type="entry name" value="GLUTAMATE--TRNA LIGASE"/>
    <property type="match status" value="1"/>
</dbReference>
<dbReference type="PANTHER" id="PTHR43311:SF2">
    <property type="entry name" value="GLUTAMATE--TRNA LIGASE, MITOCHONDRIAL-RELATED"/>
    <property type="match status" value="1"/>
</dbReference>
<dbReference type="Pfam" id="PF19269">
    <property type="entry name" value="Anticodon_2"/>
    <property type="match status" value="1"/>
</dbReference>
<dbReference type="Pfam" id="PF00749">
    <property type="entry name" value="tRNA-synt_1c"/>
    <property type="match status" value="1"/>
</dbReference>
<dbReference type="PRINTS" id="PR00987">
    <property type="entry name" value="TRNASYNTHGLU"/>
</dbReference>
<dbReference type="SUPFAM" id="SSF48163">
    <property type="entry name" value="An anticodon-binding domain of class I aminoacyl-tRNA synthetases"/>
    <property type="match status" value="1"/>
</dbReference>
<dbReference type="SUPFAM" id="SSF52374">
    <property type="entry name" value="Nucleotidylyl transferase"/>
    <property type="match status" value="1"/>
</dbReference>
<dbReference type="PROSITE" id="PS00178">
    <property type="entry name" value="AA_TRNA_LIGASE_I"/>
    <property type="match status" value="1"/>
</dbReference>
<protein>
    <recommendedName>
        <fullName evidence="1">Glutamate--tRNA ligase 1</fullName>
        <ecNumber evidence="1">6.1.1.17</ecNumber>
    </recommendedName>
    <alternativeName>
        <fullName evidence="1">Glutamyl-tRNA synthetase 1</fullName>
        <shortName evidence="1">GluRS 1</shortName>
    </alternativeName>
</protein>
<comment type="function">
    <text evidence="1">Catalyzes the attachment of glutamate to tRNA(Glu) in a two-step reaction: glutamate is first activated by ATP to form Glu-AMP and then transferred to the acceptor end of tRNA(Glu).</text>
</comment>
<comment type="catalytic activity">
    <reaction evidence="1">
        <text>tRNA(Glu) + L-glutamate + ATP = L-glutamyl-tRNA(Glu) + AMP + diphosphate</text>
        <dbReference type="Rhea" id="RHEA:23540"/>
        <dbReference type="Rhea" id="RHEA-COMP:9663"/>
        <dbReference type="Rhea" id="RHEA-COMP:9680"/>
        <dbReference type="ChEBI" id="CHEBI:29985"/>
        <dbReference type="ChEBI" id="CHEBI:30616"/>
        <dbReference type="ChEBI" id="CHEBI:33019"/>
        <dbReference type="ChEBI" id="CHEBI:78442"/>
        <dbReference type="ChEBI" id="CHEBI:78520"/>
        <dbReference type="ChEBI" id="CHEBI:456215"/>
        <dbReference type="EC" id="6.1.1.17"/>
    </reaction>
</comment>
<comment type="subunit">
    <text evidence="1">Monomer.</text>
</comment>
<comment type="subcellular location">
    <subcellularLocation>
        <location evidence="1">Cytoplasm</location>
    </subcellularLocation>
</comment>
<comment type="similarity">
    <text evidence="1">Belongs to the class-I aminoacyl-tRNA synthetase family. Glutamate--tRNA ligase type 1 subfamily.</text>
</comment>
<evidence type="ECO:0000255" key="1">
    <source>
        <dbReference type="HAMAP-Rule" id="MF_00022"/>
    </source>
</evidence>
<keyword id="KW-0030">Aminoacyl-tRNA synthetase</keyword>
<keyword id="KW-0067">ATP-binding</keyword>
<keyword id="KW-0963">Cytoplasm</keyword>
<keyword id="KW-0436">Ligase</keyword>
<keyword id="KW-0547">Nucleotide-binding</keyword>
<keyword id="KW-0648">Protein biosynthesis</keyword>
<keyword id="KW-1185">Reference proteome</keyword>
<accession>A7GXI1</accession>
<sequence>MYRFAPSPTGDMHIGNLRAAIFNYICSLQDKSGFILRIEDTDKERNIQGKEKDILEILSKFGIKPQQIYIQSENLKFHRQLASKLLIDKKAFACFCTEEELEAKKQKAKEEGVAYRYDGTCERLSDAEVLACDKPFVIRMKKPERTMSFTDAIKGELSFEPDAVDSFVIMRTDKTPTYNFACAVDDMLEGVTFVIRGEDHVSNTPKQDLIREGLGYTGKMNYAHLPILLNIEGKKMSKRENESSVKWLFEQGFLPEAIANYLILLGNKTPSEIFTIDEAVKWFDITKISRSPARFDVKKLEQINREHIKLASDDRIAEVFGMDKNLANLVRFYTQESSLVPEIKEKVNKIFAPKVAPEEYKSEFETIKNAAKNLGEFENFDDFKKALMTATGLKGKNFFMPLRALLTGDLHGPELSELYPLIKGDLARIIA</sequence>
<reference key="1">
    <citation type="submission" date="2007-07" db="EMBL/GenBank/DDBJ databases">
        <title>Genome sequence of Campylobacter curvus 525.92 isolated from human feces.</title>
        <authorList>
            <person name="Fouts D.E."/>
            <person name="Mongodin E.F."/>
            <person name="Puiu D."/>
            <person name="Sebastian Y."/>
            <person name="Miller W.G."/>
            <person name="Mandrell R.E."/>
            <person name="Lastovica A.J."/>
            <person name="Nelson K.E."/>
        </authorList>
    </citation>
    <scope>NUCLEOTIDE SEQUENCE [LARGE SCALE GENOMIC DNA]</scope>
    <source>
        <strain>525.92</strain>
    </source>
</reference>
<feature type="chain" id="PRO_0000367634" description="Glutamate--tRNA ligase 1">
    <location>
        <begin position="1"/>
        <end position="431"/>
    </location>
</feature>
<feature type="short sequence motif" description="'HIGH' region" evidence="1">
    <location>
        <begin position="6"/>
        <end position="16"/>
    </location>
</feature>
<feature type="short sequence motif" description="'KMSKS' region" evidence="1">
    <location>
        <begin position="235"/>
        <end position="239"/>
    </location>
</feature>
<feature type="binding site" evidence="1">
    <location>
        <position position="238"/>
    </location>
    <ligand>
        <name>ATP</name>
        <dbReference type="ChEBI" id="CHEBI:30616"/>
    </ligand>
</feature>
<gene>
    <name evidence="1" type="primary">gltX1</name>
    <name type="ordered locus">Ccur92_06190</name>
    <name type="ORF">CCV52592_0438</name>
</gene>